<protein>
    <recommendedName>
        <fullName>Xylose transport system permease protein XylH</fullName>
    </recommendedName>
</protein>
<reference key="1">
    <citation type="journal article" date="1994" name="Nucleic Acids Res.">
        <title>Analysis of the Escherichia coli genome. V. DNA sequence of the region from 76.0 to 81.5 minutes.</title>
        <authorList>
            <person name="Sofia H.J."/>
            <person name="Burland V."/>
            <person name="Daniels D.L."/>
            <person name="Plunkett G. III"/>
            <person name="Blattner F.R."/>
        </authorList>
    </citation>
    <scope>NUCLEOTIDE SEQUENCE [LARGE SCALE GENOMIC DNA]</scope>
    <source>
        <strain>K12 / MG1655 / ATCC 47076</strain>
    </source>
</reference>
<reference key="2">
    <citation type="journal article" date="1997" name="Science">
        <title>The complete genome sequence of Escherichia coli K-12.</title>
        <authorList>
            <person name="Blattner F.R."/>
            <person name="Plunkett G. III"/>
            <person name="Bloch C.A."/>
            <person name="Perna N.T."/>
            <person name="Burland V."/>
            <person name="Riley M."/>
            <person name="Collado-Vides J."/>
            <person name="Glasner J.D."/>
            <person name="Rode C.K."/>
            <person name="Mayhew G.F."/>
            <person name="Gregor J."/>
            <person name="Davis N.W."/>
            <person name="Kirkpatrick H.A."/>
            <person name="Goeden M.A."/>
            <person name="Rose D.J."/>
            <person name="Mau B."/>
            <person name="Shao Y."/>
        </authorList>
    </citation>
    <scope>NUCLEOTIDE SEQUENCE [LARGE SCALE GENOMIC DNA]</scope>
    <source>
        <strain>K12 / MG1655 / ATCC 47076</strain>
    </source>
</reference>
<reference key="3">
    <citation type="journal article" date="2006" name="Mol. Syst. Biol.">
        <title>Highly accurate genome sequences of Escherichia coli K-12 strains MG1655 and W3110.</title>
        <authorList>
            <person name="Hayashi K."/>
            <person name="Morooka N."/>
            <person name="Yamamoto Y."/>
            <person name="Fujita K."/>
            <person name="Isono K."/>
            <person name="Choi S."/>
            <person name="Ohtsubo E."/>
            <person name="Baba T."/>
            <person name="Wanner B.L."/>
            <person name="Mori H."/>
            <person name="Horiuchi T."/>
        </authorList>
    </citation>
    <scope>NUCLEOTIDE SEQUENCE [LARGE SCALE GENOMIC DNA]</scope>
    <source>
        <strain>K12 / W3110 / ATCC 27325 / DSM 5911</strain>
    </source>
</reference>
<reference key="4">
    <citation type="journal article" date="2005" name="Science">
        <title>Global topology analysis of the Escherichia coli inner membrane proteome.</title>
        <authorList>
            <person name="Daley D.O."/>
            <person name="Rapp M."/>
            <person name="Granseth E."/>
            <person name="Melen K."/>
            <person name="Drew D."/>
            <person name="von Heijne G."/>
        </authorList>
    </citation>
    <scope>TOPOLOGY [LARGE SCALE ANALYSIS]</scope>
    <source>
        <strain>K12 / MG1655 / ATCC 47076</strain>
    </source>
</reference>
<dbReference type="EMBL" id="U00039">
    <property type="protein sequence ID" value="AAB18545.1"/>
    <property type="molecule type" value="Genomic_DNA"/>
</dbReference>
<dbReference type="EMBL" id="U00096">
    <property type="protein sequence ID" value="AAC76592.1"/>
    <property type="molecule type" value="Genomic_DNA"/>
</dbReference>
<dbReference type="EMBL" id="AP009048">
    <property type="protein sequence ID" value="BAE77725.1"/>
    <property type="molecule type" value="Genomic_DNA"/>
</dbReference>
<dbReference type="PIR" id="S47789">
    <property type="entry name" value="S47789"/>
</dbReference>
<dbReference type="RefSeq" id="NP_418025.1">
    <property type="nucleotide sequence ID" value="NC_000913.3"/>
</dbReference>
<dbReference type="RefSeq" id="WP_000045978.1">
    <property type="nucleotide sequence ID" value="NZ_STEB01000018.1"/>
</dbReference>
<dbReference type="BioGRID" id="4262543">
    <property type="interactions" value="15"/>
</dbReference>
<dbReference type="BioGRID" id="852391">
    <property type="interactions" value="3"/>
</dbReference>
<dbReference type="ComplexPortal" id="CPX-4388">
    <property type="entry name" value="Xylose ABC transporter complex"/>
</dbReference>
<dbReference type="FunCoup" id="P0AGI4">
    <property type="interactions" value="547"/>
</dbReference>
<dbReference type="IntAct" id="P0AGI4">
    <property type="interactions" value="3"/>
</dbReference>
<dbReference type="STRING" id="511145.b3568"/>
<dbReference type="TCDB" id="3.A.1.2.4">
    <property type="family name" value="the atp-binding cassette (abc) superfamily"/>
</dbReference>
<dbReference type="PaxDb" id="511145-b3568"/>
<dbReference type="EnsemblBacteria" id="AAC76592">
    <property type="protein sequence ID" value="AAC76592"/>
    <property type="gene ID" value="b3568"/>
</dbReference>
<dbReference type="GeneID" id="948083"/>
<dbReference type="KEGG" id="ecj:JW3540"/>
<dbReference type="KEGG" id="eco:b3568"/>
<dbReference type="KEGG" id="ecoc:C3026_19345"/>
<dbReference type="PATRIC" id="fig|1411691.4.peg.3144"/>
<dbReference type="EchoBASE" id="EB2185"/>
<dbReference type="eggNOG" id="COG4214">
    <property type="taxonomic scope" value="Bacteria"/>
</dbReference>
<dbReference type="HOGENOM" id="CLU_028880_2_0_6"/>
<dbReference type="InParanoid" id="P0AGI4"/>
<dbReference type="OMA" id="AVWMDTA"/>
<dbReference type="OrthoDB" id="5422926at2"/>
<dbReference type="PhylomeDB" id="P0AGI4"/>
<dbReference type="BioCyc" id="EcoCyc:XYLH-MONOMER"/>
<dbReference type="BioCyc" id="MetaCyc:XYLH-MONOMER"/>
<dbReference type="PRO" id="PR:P0AGI4"/>
<dbReference type="Proteomes" id="UP000000625">
    <property type="component" value="Chromosome"/>
</dbReference>
<dbReference type="GO" id="GO:0055052">
    <property type="term" value="C:ATP-binding cassette (ABC) transporter complex, substrate-binding subunit-containing"/>
    <property type="evidence" value="ECO:0000303"/>
    <property type="project" value="ComplexPortal"/>
</dbReference>
<dbReference type="GO" id="GO:0016020">
    <property type="term" value="C:membrane"/>
    <property type="evidence" value="ECO:0000303"/>
    <property type="project" value="ComplexPortal"/>
</dbReference>
<dbReference type="GO" id="GO:0005886">
    <property type="term" value="C:plasma membrane"/>
    <property type="evidence" value="ECO:0000314"/>
    <property type="project" value="EcoCyc"/>
</dbReference>
<dbReference type="GO" id="GO:0022857">
    <property type="term" value="F:transmembrane transporter activity"/>
    <property type="evidence" value="ECO:0007669"/>
    <property type="project" value="InterPro"/>
</dbReference>
<dbReference type="GO" id="GO:0015752">
    <property type="term" value="P:D-ribose transmembrane transport"/>
    <property type="evidence" value="ECO:0000269"/>
    <property type="project" value="EcoCyc"/>
</dbReference>
<dbReference type="GO" id="GO:0042732">
    <property type="term" value="P:D-xylose metabolic process"/>
    <property type="evidence" value="ECO:0000315"/>
    <property type="project" value="EcoCyc"/>
</dbReference>
<dbReference type="GO" id="GO:0015753">
    <property type="term" value="P:D-xylose transmembrane transport"/>
    <property type="evidence" value="ECO:0000303"/>
    <property type="project" value="ComplexPortal"/>
</dbReference>
<dbReference type="CDD" id="cd06579">
    <property type="entry name" value="TM_PBP1_transp_AraH_like"/>
    <property type="match status" value="1"/>
</dbReference>
<dbReference type="InterPro" id="IPR001851">
    <property type="entry name" value="ABC_transp_permease"/>
</dbReference>
<dbReference type="PANTHER" id="PTHR32196">
    <property type="entry name" value="ABC TRANSPORTER PERMEASE PROTEIN YPHD-RELATED-RELATED"/>
    <property type="match status" value="1"/>
</dbReference>
<dbReference type="PANTHER" id="PTHR32196:SF32">
    <property type="entry name" value="XYLOSE TRANSPORT SYSTEM PERMEASE PROTEIN XYLH"/>
    <property type="match status" value="1"/>
</dbReference>
<dbReference type="Pfam" id="PF02653">
    <property type="entry name" value="BPD_transp_2"/>
    <property type="match status" value="1"/>
</dbReference>
<name>XYLH_ECOLI</name>
<proteinExistence type="evidence at protein level"/>
<keyword id="KW-0997">Cell inner membrane</keyword>
<keyword id="KW-1003">Cell membrane</keyword>
<keyword id="KW-0472">Membrane</keyword>
<keyword id="KW-1185">Reference proteome</keyword>
<keyword id="KW-0762">Sugar transport</keyword>
<keyword id="KW-0812">Transmembrane</keyword>
<keyword id="KW-1133">Transmembrane helix</keyword>
<keyword id="KW-0813">Transport</keyword>
<gene>
    <name type="primary">xylH</name>
    <name type="ordered locus">b3568</name>
    <name type="ordered locus">JW3540</name>
</gene>
<feature type="chain" id="PRO_0000060234" description="Xylose transport system permease protein XylH">
    <location>
        <begin position="1"/>
        <end position="393"/>
    </location>
</feature>
<feature type="topological domain" description="Periplasmic" evidence="1">
    <location>
        <begin position="1"/>
        <end position="24"/>
    </location>
</feature>
<feature type="transmembrane region" description="Helical" evidence="1">
    <location>
        <begin position="25"/>
        <end position="45"/>
    </location>
</feature>
<feature type="topological domain" description="Cytoplasmic" evidence="1">
    <location>
        <begin position="46"/>
        <end position="64"/>
    </location>
</feature>
<feature type="transmembrane region" description="Helical" evidence="1">
    <location>
        <begin position="65"/>
        <end position="85"/>
    </location>
</feature>
<feature type="topological domain" description="Periplasmic" evidence="1">
    <location>
        <begin position="86"/>
        <end position="102"/>
    </location>
</feature>
<feature type="transmembrane region" description="Helical" evidence="1">
    <location>
        <begin position="103"/>
        <end position="123"/>
    </location>
</feature>
<feature type="topological domain" description="Cytoplasmic" evidence="1">
    <location>
        <begin position="124"/>
        <end position="135"/>
    </location>
</feature>
<feature type="transmembrane region" description="Helical" evidence="1">
    <location>
        <begin position="136"/>
        <end position="156"/>
    </location>
</feature>
<feature type="topological domain" description="Periplasmic" evidence="1">
    <location>
        <begin position="157"/>
        <end position="175"/>
    </location>
</feature>
<feature type="transmembrane region" description="Helical" evidence="1">
    <location>
        <begin position="176"/>
        <end position="196"/>
    </location>
</feature>
<feature type="topological domain" description="Cytoplasmic" evidence="1">
    <location>
        <begin position="197"/>
        <end position="214"/>
    </location>
</feature>
<feature type="transmembrane region" description="Helical" evidence="1">
    <location>
        <begin position="215"/>
        <end position="235"/>
    </location>
</feature>
<feature type="topological domain" description="Periplasmic" evidence="1">
    <location>
        <begin position="236"/>
        <end position="239"/>
    </location>
</feature>
<feature type="transmembrane region" description="Helical" evidence="1">
    <location>
        <begin position="240"/>
        <end position="260"/>
    </location>
</feature>
<feature type="topological domain" description="Cytoplasmic" evidence="1">
    <location>
        <begin position="261"/>
        <end position="287"/>
    </location>
</feature>
<feature type="transmembrane region" description="Helical" evidence="1">
    <location>
        <begin position="288"/>
        <end position="308"/>
    </location>
</feature>
<feature type="topological domain" description="Periplasmic" evidence="1">
    <location>
        <begin position="309"/>
        <end position="312"/>
    </location>
</feature>
<feature type="transmembrane region" description="Helical" evidence="1">
    <location>
        <begin position="313"/>
        <end position="333"/>
    </location>
</feature>
<feature type="topological domain" description="Cytoplasmic" evidence="1">
    <location>
        <begin position="334"/>
        <end position="336"/>
    </location>
</feature>
<feature type="transmembrane region" description="Helical" evidence="1">
    <location>
        <begin position="337"/>
        <end position="357"/>
    </location>
</feature>
<feature type="topological domain" description="Periplasmic" evidence="1">
    <location>
        <begin position="358"/>
        <end position="365"/>
    </location>
</feature>
<feature type="transmembrane region" description="Helical" evidence="1">
    <location>
        <begin position="366"/>
        <end position="386"/>
    </location>
</feature>
<feature type="topological domain" description="Cytoplasmic" evidence="1">
    <location>
        <begin position="387"/>
        <end position="393"/>
    </location>
</feature>
<comment type="function">
    <text>Part of the binding-protein-dependent transport system for D-xylose. Probably responsible for the translocation of the substrate across the membrane.</text>
</comment>
<comment type="subcellular location">
    <subcellularLocation>
        <location>Cell inner membrane</location>
        <topology>Multi-pass membrane protein</topology>
    </subcellularLocation>
</comment>
<comment type="similarity">
    <text evidence="2">Belongs to the binding-protein-dependent transport system permease family. AraH/RbsC subfamily.</text>
</comment>
<organism>
    <name type="scientific">Escherichia coli (strain K12)</name>
    <dbReference type="NCBI Taxonomy" id="83333"/>
    <lineage>
        <taxon>Bacteria</taxon>
        <taxon>Pseudomonadati</taxon>
        <taxon>Pseudomonadota</taxon>
        <taxon>Gammaproteobacteria</taxon>
        <taxon>Enterobacterales</taxon>
        <taxon>Enterobacteriaceae</taxon>
        <taxon>Escherichia</taxon>
    </lineage>
</organism>
<sequence>MSKSNPSEVKLAVPTSGGFSGLKSLNLQVFVMIAAIIAIMLFFTWTTDGAYLSARNVSNLLRQTAITGILAVGMVFVIISAEIDLSVGSMMGLLGGVAAICDVWLGWPLPLTIIVTLVLGLLLGAWNGWWVAYRKVPSFIVTLAGMLAFRGILIGITNGTTVSPTSAAMSQIGQSYLPASTGFIIGALGLMAFVGWQWRGRMRRQALGLQSPASTAVVGRQALTAIIVLGAIWLLNDYRGVPTPVLLLTLLLLGGMFMATRTAFGRRIYAIGGNLEAARLSGINVERTKLAVFAINGLMVAIAGLILSSRLGAGSPSAGNIAELDAIAACVIGGTSLAGGVGSVAGAVMGAFIMASLDNGMSMMDVPTFWQYIVKGAILLLAVWMDSATKRRS</sequence>
<accession>P0AGI4</accession>
<accession>P37389</accession>
<accession>Q2M7N1</accession>
<evidence type="ECO:0000255" key="1"/>
<evidence type="ECO:0000305" key="2"/>